<gene>
    <name evidence="7" type="primary">sel-2</name>
    <name type="ORF">CBG18029</name>
</gene>
<organism>
    <name type="scientific">Caenorhabditis briggsae</name>
    <dbReference type="NCBI Taxonomy" id="6238"/>
    <lineage>
        <taxon>Eukaryota</taxon>
        <taxon>Metazoa</taxon>
        <taxon>Ecdysozoa</taxon>
        <taxon>Nematoda</taxon>
        <taxon>Chromadorea</taxon>
        <taxon>Rhabditida</taxon>
        <taxon>Rhabditina</taxon>
        <taxon>Rhabditomorpha</taxon>
        <taxon>Rhabditoidea</taxon>
        <taxon>Rhabditidae</taxon>
        <taxon>Peloderinae</taxon>
        <taxon>Caenorhabditis</taxon>
    </lineage>
</organism>
<accession>A8XSV3</accession>
<reference evidence="7" key="1">
    <citation type="journal article" date="2003" name="PLoS Biol.">
        <title>The genome sequence of Caenorhabditis briggsae: a platform for comparative genomics.</title>
        <authorList>
            <person name="Stein L.D."/>
            <person name="Bao Z."/>
            <person name="Blasiar D."/>
            <person name="Blumenthal T."/>
            <person name="Brent M.R."/>
            <person name="Chen N."/>
            <person name="Chinwalla A."/>
            <person name="Clarke L."/>
            <person name="Clee C."/>
            <person name="Coghlan A."/>
            <person name="Coulson A."/>
            <person name="D'Eustachio P."/>
            <person name="Fitch D.H.A."/>
            <person name="Fulton L.A."/>
            <person name="Fulton R.E."/>
            <person name="Griffiths-Jones S."/>
            <person name="Harris T.W."/>
            <person name="Hillier L.W."/>
            <person name="Kamath R."/>
            <person name="Kuwabara P.E."/>
            <person name="Mardis E.R."/>
            <person name="Marra M.A."/>
            <person name="Miner T.L."/>
            <person name="Minx P."/>
            <person name="Mullikin J.C."/>
            <person name="Plumb R.W."/>
            <person name="Rogers J."/>
            <person name="Schein J.E."/>
            <person name="Sohrmann M."/>
            <person name="Spieth J."/>
            <person name="Stajich J.E."/>
            <person name="Wei C."/>
            <person name="Willey D."/>
            <person name="Wilson R.K."/>
            <person name="Durbin R.M."/>
            <person name="Waterston R.H."/>
        </authorList>
    </citation>
    <scope>NUCLEOTIDE SEQUENCE [LARGE SCALE GENOMIC DNA]</scope>
    <source>
        <strain evidence="7">AF16</strain>
    </source>
</reference>
<feature type="chain" id="PRO_0000372678" description="Putative neurobeachin homolog">
    <location>
        <begin position="1"/>
        <end position="2531"/>
    </location>
</feature>
<feature type="domain" description="BEACH-type PH" evidence="5">
    <location>
        <begin position="1714"/>
        <end position="1822"/>
    </location>
</feature>
<feature type="domain" description="BEACH" evidence="4">
    <location>
        <begin position="1841"/>
        <end position="2130"/>
    </location>
</feature>
<feature type="repeat" description="WD 1" evidence="3">
    <location>
        <begin position="2289"/>
        <end position="2332"/>
    </location>
</feature>
<feature type="repeat" description="WD 2" evidence="3">
    <location>
        <begin position="2350"/>
        <end position="2389"/>
    </location>
</feature>
<feature type="repeat" description="WD 3" evidence="3">
    <location>
        <begin position="2429"/>
        <end position="2468"/>
    </location>
</feature>
<feature type="repeat" description="WD 4" evidence="3">
    <location>
        <begin position="2471"/>
        <end position="2510"/>
    </location>
</feature>
<feature type="region of interest" description="Disordered" evidence="6">
    <location>
        <begin position="1"/>
        <end position="101"/>
    </location>
</feature>
<feature type="region of interest" description="Disordered" evidence="6">
    <location>
        <begin position="1363"/>
        <end position="1398"/>
    </location>
</feature>
<feature type="region of interest" description="Disordered" evidence="6">
    <location>
        <begin position="1420"/>
        <end position="1440"/>
    </location>
</feature>
<feature type="region of interest" description="Disordered" evidence="6">
    <location>
        <begin position="1642"/>
        <end position="1670"/>
    </location>
</feature>
<feature type="compositionally biased region" description="Acidic residues" evidence="6">
    <location>
        <begin position="1"/>
        <end position="10"/>
    </location>
</feature>
<feature type="compositionally biased region" description="Acidic residues" evidence="6">
    <location>
        <begin position="26"/>
        <end position="35"/>
    </location>
</feature>
<feature type="compositionally biased region" description="Acidic residues" evidence="6">
    <location>
        <begin position="62"/>
        <end position="74"/>
    </location>
</feature>
<feature type="compositionally biased region" description="Basic and acidic residues" evidence="6">
    <location>
        <begin position="1363"/>
        <end position="1379"/>
    </location>
</feature>
<feature type="compositionally biased region" description="Polar residues" evidence="6">
    <location>
        <begin position="1427"/>
        <end position="1440"/>
    </location>
</feature>
<feature type="compositionally biased region" description="Basic and acidic residues" evidence="6">
    <location>
        <begin position="1650"/>
        <end position="1670"/>
    </location>
</feature>
<protein>
    <recommendedName>
        <fullName evidence="1">Putative neurobeachin homolog</fullName>
    </recommendedName>
    <alternativeName>
        <fullName>Suppressor enhancer of lin-12</fullName>
    </alternativeName>
</protein>
<dbReference type="EMBL" id="HE600963">
    <property type="protein sequence ID" value="CAP35556.1"/>
    <property type="molecule type" value="Genomic_DNA"/>
</dbReference>
<dbReference type="SMR" id="A8XSV3"/>
<dbReference type="FunCoup" id="A8XSV3">
    <property type="interactions" value="2588"/>
</dbReference>
<dbReference type="STRING" id="6238.A8XSV3"/>
<dbReference type="KEGG" id="cbr:CBG_18029"/>
<dbReference type="CTD" id="8584083"/>
<dbReference type="WormBase" id="CBG18029a">
    <property type="protein sequence ID" value="CBP44582"/>
    <property type="gene ID" value="WBGene00037526"/>
    <property type="gene designation" value="Cbr-sel-2"/>
</dbReference>
<dbReference type="eggNOG" id="KOG1787">
    <property type="taxonomic scope" value="Eukaryota"/>
</dbReference>
<dbReference type="HOGENOM" id="CLU_000218_2_0_1"/>
<dbReference type="InParanoid" id="A8XSV3"/>
<dbReference type="OMA" id="XRKVEIM"/>
<dbReference type="Proteomes" id="UP000008549">
    <property type="component" value="Unassembled WGS sequence"/>
</dbReference>
<dbReference type="GO" id="GO:0005829">
    <property type="term" value="C:cytosol"/>
    <property type="evidence" value="ECO:0000318"/>
    <property type="project" value="GO_Central"/>
</dbReference>
<dbReference type="GO" id="GO:0016020">
    <property type="term" value="C:membrane"/>
    <property type="evidence" value="ECO:0000318"/>
    <property type="project" value="GO_Central"/>
</dbReference>
<dbReference type="GO" id="GO:0005634">
    <property type="term" value="C:nucleus"/>
    <property type="evidence" value="ECO:0007669"/>
    <property type="project" value="UniProtKB-SubCell"/>
</dbReference>
<dbReference type="GO" id="GO:0019901">
    <property type="term" value="F:protein kinase binding"/>
    <property type="evidence" value="ECO:0000318"/>
    <property type="project" value="GO_Central"/>
</dbReference>
<dbReference type="GO" id="GO:0008104">
    <property type="term" value="P:protein localization"/>
    <property type="evidence" value="ECO:0000318"/>
    <property type="project" value="GO_Central"/>
</dbReference>
<dbReference type="CDD" id="cd06071">
    <property type="entry name" value="Beach"/>
    <property type="match status" value="1"/>
</dbReference>
<dbReference type="CDD" id="cd01201">
    <property type="entry name" value="PH_BEACH"/>
    <property type="match status" value="1"/>
</dbReference>
<dbReference type="FunFam" id="1.10.1540.10:FF:000001">
    <property type="entry name" value="neurobeachin isoform X1"/>
    <property type="match status" value="1"/>
</dbReference>
<dbReference type="Gene3D" id="2.60.120.200">
    <property type="match status" value="1"/>
</dbReference>
<dbReference type="Gene3D" id="1.10.1540.10">
    <property type="entry name" value="BEACH domain"/>
    <property type="match status" value="1"/>
</dbReference>
<dbReference type="Gene3D" id="2.30.29.30">
    <property type="entry name" value="Pleckstrin-homology domain (PH domain)/Phosphotyrosine-binding domain (PTB)"/>
    <property type="match status" value="1"/>
</dbReference>
<dbReference type="Gene3D" id="2.130.10.10">
    <property type="entry name" value="YVTN repeat-like/Quinoprotein amine dehydrogenase"/>
    <property type="match status" value="2"/>
</dbReference>
<dbReference type="InterPro" id="IPR016024">
    <property type="entry name" value="ARM-type_fold"/>
</dbReference>
<dbReference type="InterPro" id="IPR000409">
    <property type="entry name" value="BEACH_dom"/>
</dbReference>
<dbReference type="InterPro" id="IPR036372">
    <property type="entry name" value="BEACH_dom_sf"/>
</dbReference>
<dbReference type="InterPro" id="IPR050865">
    <property type="entry name" value="BEACH_Domain"/>
</dbReference>
<dbReference type="InterPro" id="IPR013320">
    <property type="entry name" value="ConA-like_dom_sf"/>
</dbReference>
<dbReference type="InterPro" id="IPR046851">
    <property type="entry name" value="NBCH_WD40"/>
</dbReference>
<dbReference type="InterPro" id="IPR010508">
    <property type="entry name" value="NBEA-like_DUF1088"/>
</dbReference>
<dbReference type="InterPro" id="IPR031570">
    <property type="entry name" value="NBEA/BDCP_DUF4704"/>
</dbReference>
<dbReference type="InterPro" id="IPR046852">
    <property type="entry name" value="Neurobeachin_a-sol"/>
</dbReference>
<dbReference type="InterPro" id="IPR023362">
    <property type="entry name" value="PH-BEACH_dom"/>
</dbReference>
<dbReference type="InterPro" id="IPR011993">
    <property type="entry name" value="PH-like_dom_sf"/>
</dbReference>
<dbReference type="InterPro" id="IPR015943">
    <property type="entry name" value="WD40/YVTN_repeat-like_dom_sf"/>
</dbReference>
<dbReference type="InterPro" id="IPR036322">
    <property type="entry name" value="WD40_repeat_dom_sf"/>
</dbReference>
<dbReference type="InterPro" id="IPR001680">
    <property type="entry name" value="WD40_rpt"/>
</dbReference>
<dbReference type="PANTHER" id="PTHR13743">
    <property type="entry name" value="BEIGE/BEACH-RELATED"/>
    <property type="match status" value="1"/>
</dbReference>
<dbReference type="PANTHER" id="PTHR13743:SF162">
    <property type="entry name" value="NEUROBEACHIN"/>
    <property type="match status" value="1"/>
</dbReference>
<dbReference type="Pfam" id="PF02138">
    <property type="entry name" value="Beach"/>
    <property type="match status" value="1"/>
</dbReference>
<dbReference type="Pfam" id="PF06469">
    <property type="entry name" value="DUF1088"/>
    <property type="match status" value="1"/>
</dbReference>
<dbReference type="Pfam" id="PF15787">
    <property type="entry name" value="DUF4704"/>
    <property type="match status" value="1"/>
</dbReference>
<dbReference type="Pfam" id="PF13385">
    <property type="entry name" value="Laminin_G_3"/>
    <property type="match status" value="1"/>
</dbReference>
<dbReference type="Pfam" id="PF20426">
    <property type="entry name" value="NBCH_WD40"/>
    <property type="match status" value="1"/>
</dbReference>
<dbReference type="Pfam" id="PF20425">
    <property type="entry name" value="Neurobeachin"/>
    <property type="match status" value="1"/>
</dbReference>
<dbReference type="Pfam" id="PF14844">
    <property type="entry name" value="PH_BEACH"/>
    <property type="match status" value="1"/>
</dbReference>
<dbReference type="SMART" id="SM01026">
    <property type="entry name" value="Beach"/>
    <property type="match status" value="1"/>
</dbReference>
<dbReference type="SMART" id="SM00320">
    <property type="entry name" value="WD40"/>
    <property type="match status" value="4"/>
</dbReference>
<dbReference type="SUPFAM" id="SSF48371">
    <property type="entry name" value="ARM repeat"/>
    <property type="match status" value="1"/>
</dbReference>
<dbReference type="SUPFAM" id="SSF81837">
    <property type="entry name" value="BEACH domain"/>
    <property type="match status" value="1"/>
</dbReference>
<dbReference type="SUPFAM" id="SSF49899">
    <property type="entry name" value="Concanavalin A-like lectins/glucanases"/>
    <property type="match status" value="1"/>
</dbReference>
<dbReference type="SUPFAM" id="SSF50729">
    <property type="entry name" value="PH domain-like"/>
    <property type="match status" value="1"/>
</dbReference>
<dbReference type="SUPFAM" id="SSF50978">
    <property type="entry name" value="WD40 repeat-like"/>
    <property type="match status" value="1"/>
</dbReference>
<dbReference type="PROSITE" id="PS50197">
    <property type="entry name" value="BEACH"/>
    <property type="match status" value="1"/>
</dbReference>
<dbReference type="PROSITE" id="PS51783">
    <property type="entry name" value="PH_BEACH"/>
    <property type="match status" value="1"/>
</dbReference>
<evidence type="ECO:0000250" key="1">
    <source>
        <dbReference type="UniProtKB" id="Q19317"/>
    </source>
</evidence>
<evidence type="ECO:0000250" key="2">
    <source>
        <dbReference type="UniProtKB" id="Q9W4E2"/>
    </source>
</evidence>
<evidence type="ECO:0000255" key="3"/>
<evidence type="ECO:0000255" key="4">
    <source>
        <dbReference type="PROSITE-ProRule" id="PRU00026"/>
    </source>
</evidence>
<evidence type="ECO:0000255" key="5">
    <source>
        <dbReference type="PROSITE-ProRule" id="PRU01119"/>
    </source>
</evidence>
<evidence type="ECO:0000256" key="6">
    <source>
        <dbReference type="SAM" id="MobiDB-lite"/>
    </source>
</evidence>
<evidence type="ECO:0000312" key="7">
    <source>
        <dbReference type="EMBL" id="CAP35556.1"/>
    </source>
</evidence>
<keyword id="KW-0963">Cytoplasm</keyword>
<keyword id="KW-0472">Membrane</keyword>
<keyword id="KW-0539">Nucleus</keyword>
<keyword id="KW-1185">Reference proteome</keyword>
<keyword id="KW-0677">Repeat</keyword>
<keyword id="KW-0853">WD repeat</keyword>
<sequence length="2531" mass="284664">MDISETEYNDSDPPVQENGNGKAVVEDEVNDEESNMETVDLGLDDKTSDASSQNVFKNIDNEPSDDQQNVEESENITLEKPEEISAPPTVVSTSQDVSPPPAIESLPPLLEGKELELEDDVTSSLPRLLSKTTLIHSNEEGADETIQRLISSLHSNSPNMDRTQIVDHLFNLLVGGHFDQESKFVIEHVANVDHMLTLLSHCDCDLQNEIWSLFLAVMKKSNRNLEACTRVGLISKNFFLNLVLDLLPEAPPLLADLLVQIIAALVAYSINVKQTKHLLRALRSTKDQWPPNSLKLLHVLKEMPQHDSADVFFSFPGKDQSGIILPPIKTMPYQQGWTFATWLRMEPLNSVTFEKEQPVLYSFRTSKGIGYSCHIFGNCLVVNVEKAKGKEQSRCVKAELGARKWHHIAIAHCYSRWGRSDIKCFIDGQLAETIELSWVVTSTTSWDRCSIGVSADGAVNTAFCGQMGAMYLFAESLSLQQANSLFCLGPAYQSTFKHDSETSLPEGYKKHLFDGHLHSSLVFAYCPKNCHGQLCLFTPPKTAANTYFVQIPHAVMKEGVEVITTHSIHKSLQSVGGIQILLPLFAQIDLPSSHDNTIDGDVCQTLLSLISLLLSSSQSSQQQLFHSKGFLIISSCLQEASPSHLSMKVLEQIIHIAKFLLRCPAGGPLLKHLFDYILFNPKLWIRARPEVQVHLYQYLATDFLANNNFSQMLRRVPTVIEMCHTLKHFYWLALPQTVSDYTVEERPENFATAEIVSIRSAILTFINRIIISSNSPDEEEKARDQEIHTLLNLLATVREDDNLYDVLALVTRLLAEHPAIMIPAIDKNKALGIIFNLLAAPNELIRIPALKILGFFLSRSTLKRKTESMGSQNLFSLIGERLLSHKRTISLPTYNVLLEVLVEQMTPTFTYAAHQPAQPDWKFENPHLLKVIAHVISQCEETESLVQIKKCFLIDIINLCRESKENRRTILQMSVWQDWLIGLAYVFHTSESQNEVSELVWEAFSILLHHALRHEYGGWRVWVDTLAIAHSKVSYEKFKRRLAEAKAKAEKAETGEEAKMEPTPVYRAPEFAWSEVHIRLLADLLSGIERTVEEWKTQEGGISDQCNASENQVFVGNVVHVISQLADSLIMACGGLLPLLASATAPNNDMEIVDPCQQQLPISVAASFLMRFAKLVDTFVLASGVSFSELEQEKNMPAGGVLRQSLRISATVTVRHILASRIQQPDTPRYETNSAKKNQCIMDFVKEALENFSPEGLENVERLVQDSDITRIKGVVYRDMVEENRQAQFLALSVIYLVSVLMVSRYRDILEPPSSPSPFFDSTTTKQENAERGEKLFEFSHNPLFLELPESSSEAVANGKVANDGDHASIKNGSDHSENGADEETEEKGEQGQGDNGGTIAAIKVANSDMKNDGNEYNEEELKKMHQSNGRRPSTLMPPQQTAERRAYLTTKLQTALETCAPLLREMMSDFRGYLQKTLVGTHGQEIMNDTKVLETLRNRNASVIELVMLLCSQEWQTSLQKHAGLAFIELVNEGRLMAHATRDHVLRVANEADFILNRLRAEDVSKHAQFEAESREQLNARYEEYSRCDLLIVSGRLRDSLNATRLLDKMSAILTDGDDSKSGSQFWKLDVWEDDSRRRKRFVPNPYGSRHEEANLPEGEKNEEPEISEQERIRKILKGLFSQRHATTTSTGGQELVDESDIDKWAQEVDPTPSSQSACFSTAAKLIVPGVVVPGTLSVTASDLFFDANESDPNYKKQCAQVLRYCEALHARWNLQEIRAIFLRRYLLQNTALEMFLASRTAIMFAFDSEDTVRKVVYQLPRVGVGVKYGLPQSRKTSLMTPRQLFKHSDMCAKWQKREISNFDYLMFLNTVAGRTFNDLSQYPVFPWILTNYTSDTLDLSVASNFRDLSKPIGALNEARRKFFTDRYASWDDDLVPAFHYGTHYSTPAFTLNWLLRLEPFASMFINLHDGKFDHPDRITHSIKDSWDRCQRDSHDVKELIPELFYLPEMFRNSSKFNLGRRADGTLVDDVVLPPWAESPEHFVLMHRQALESDLVSCQLNQWIDLIFGYKQRGAEAVRATNVFYHLTYEGTVTQKMAETPGQVSAIEQQILSFGQTPSQLLAEAHPPRHSIMTMAPTMFRRHDDDLCMMMKYISNSPVVYLAANTFHQLPHPTVVGVAQNLVFSLNKWDNSYSYGSTQRSALSMDPSNVEGQVALPLTADPQLATAASTTPIARRHLGDAFDQRLQVQCSNFVTTTDSKYIFACGYPDYSFRIVDTDSGRVRQAVYGHGDVVTCIARSETSLFSDCYVVTGSMDCTVVLWHWNGTTGFIAGEYNQPGEVPSPRSILTGHEASISALCVSAEHGLVVSGCEDGVILIHTTASDLLRRIRGHGTVTQLSMSRECILLVLFDSKRMTTYSSTARKLNEVLSEEKIECVTVTRDGEFAVTGAVNGRITIWRMFPLNKLYTYQPLNSAVRSVAVVASHRFILGGLDSGAIVVFNADFNRWHYEYKHRYIQNSSATKPAQASPQK</sequence>
<proteinExistence type="inferred from homology"/>
<name>NBEA_CAEBR</name>
<comment type="function">
    <text evidence="1 2">Binds to type II regulatory subunits of protein kinase A and anchors/targets them to the membrane. May anchor the kinase to cytoskeletal and/or organelle-associated proteins. Regulates endosomal traffic in polarized epithelial cells such as the vulval precursor cells and intestinal cells. Thought to act as a negative regulator of lin-12 activity in vulval precursor cells. May have a role in the internalization process from basolateral surface of polarized epithelial cells (By similarity).</text>
</comment>
<comment type="subunit">
    <text evidence="2">Interacts with RII subunit of PKA.</text>
</comment>
<comment type="subcellular location">
    <subcellularLocation>
        <location evidence="1 2">Cytoplasm</location>
    </subcellularLocation>
    <subcellularLocation>
        <location evidence="1 2">Membrane</location>
        <topology evidence="1 2">Peripheral membrane protein</topology>
    </subcellularLocation>
    <subcellularLocation>
        <location evidence="1 2">Nucleus</location>
    </subcellularLocation>
</comment>
<comment type="similarity">
    <text evidence="3">Belongs to the WD repeat neurobeachin family.</text>
</comment>